<evidence type="ECO:0000255" key="1">
    <source>
        <dbReference type="HAMAP-Rule" id="MF_01219"/>
    </source>
</evidence>
<dbReference type="EC" id="2.4.2.9" evidence="1"/>
<dbReference type="EMBL" id="FM204883">
    <property type="protein sequence ID" value="CAW94104.1"/>
    <property type="molecule type" value="Genomic_DNA"/>
</dbReference>
<dbReference type="RefSeq" id="WP_012677848.1">
    <property type="nucleotide sequence ID" value="NC_012471.1"/>
</dbReference>
<dbReference type="SMR" id="C0M760"/>
<dbReference type="GeneID" id="83705023"/>
<dbReference type="KEGG" id="seu:SEQ_1317"/>
<dbReference type="HOGENOM" id="CLU_094234_2_1_9"/>
<dbReference type="OrthoDB" id="9802227at2"/>
<dbReference type="Proteomes" id="UP000001365">
    <property type="component" value="Chromosome"/>
</dbReference>
<dbReference type="GO" id="GO:0003723">
    <property type="term" value="F:RNA binding"/>
    <property type="evidence" value="ECO:0007669"/>
    <property type="project" value="UniProtKB-UniRule"/>
</dbReference>
<dbReference type="GO" id="GO:0004845">
    <property type="term" value="F:uracil phosphoribosyltransferase activity"/>
    <property type="evidence" value="ECO:0007669"/>
    <property type="project" value="UniProtKB-UniRule"/>
</dbReference>
<dbReference type="GO" id="GO:0006353">
    <property type="term" value="P:DNA-templated transcription termination"/>
    <property type="evidence" value="ECO:0007669"/>
    <property type="project" value="UniProtKB-UniRule"/>
</dbReference>
<dbReference type="CDD" id="cd06223">
    <property type="entry name" value="PRTases_typeI"/>
    <property type="match status" value="1"/>
</dbReference>
<dbReference type="FunFam" id="3.40.50.2020:FF:000020">
    <property type="entry name" value="Bifunctional protein PyrR"/>
    <property type="match status" value="1"/>
</dbReference>
<dbReference type="Gene3D" id="3.40.50.2020">
    <property type="match status" value="1"/>
</dbReference>
<dbReference type="HAMAP" id="MF_01219">
    <property type="entry name" value="PyrR"/>
    <property type="match status" value="1"/>
</dbReference>
<dbReference type="InterPro" id="IPR000836">
    <property type="entry name" value="PRibTrfase_dom"/>
</dbReference>
<dbReference type="InterPro" id="IPR029057">
    <property type="entry name" value="PRTase-like"/>
</dbReference>
<dbReference type="InterPro" id="IPR023050">
    <property type="entry name" value="PyrR"/>
</dbReference>
<dbReference type="InterPro" id="IPR050137">
    <property type="entry name" value="PyrR_bifunctional"/>
</dbReference>
<dbReference type="NCBIfam" id="NF003548">
    <property type="entry name" value="PRK05205.1-4"/>
    <property type="match status" value="1"/>
</dbReference>
<dbReference type="NCBIfam" id="NF003549">
    <property type="entry name" value="PRK05205.1-5"/>
    <property type="match status" value="1"/>
</dbReference>
<dbReference type="PANTHER" id="PTHR11608">
    <property type="entry name" value="BIFUNCTIONAL PROTEIN PYRR"/>
    <property type="match status" value="1"/>
</dbReference>
<dbReference type="PANTHER" id="PTHR11608:SF0">
    <property type="entry name" value="BIFUNCTIONAL PROTEIN PYRR"/>
    <property type="match status" value="1"/>
</dbReference>
<dbReference type="Pfam" id="PF00156">
    <property type="entry name" value="Pribosyltran"/>
    <property type="match status" value="1"/>
</dbReference>
<dbReference type="SUPFAM" id="SSF53271">
    <property type="entry name" value="PRTase-like"/>
    <property type="match status" value="1"/>
</dbReference>
<feature type="chain" id="PRO_1000164853" description="Bifunctional protein PyrR">
    <location>
        <begin position="1"/>
        <end position="173"/>
    </location>
</feature>
<feature type="short sequence motif" description="PRPP-binding" evidence="1">
    <location>
        <begin position="93"/>
        <end position="105"/>
    </location>
</feature>
<reference key="1">
    <citation type="journal article" date="2009" name="PLoS Pathog.">
        <title>Genomic evidence for the evolution of Streptococcus equi: host restriction, increased virulence, and genetic exchange with human pathogens.</title>
        <authorList>
            <person name="Holden M.T.G."/>
            <person name="Heather Z."/>
            <person name="Paillot R."/>
            <person name="Steward K.F."/>
            <person name="Webb K."/>
            <person name="Ainslie F."/>
            <person name="Jourdan T."/>
            <person name="Bason N.C."/>
            <person name="Holroyd N.E."/>
            <person name="Mungall K."/>
            <person name="Quail M.A."/>
            <person name="Sanders M."/>
            <person name="Simmonds M."/>
            <person name="Willey D."/>
            <person name="Brooks K."/>
            <person name="Aanensen D.M."/>
            <person name="Spratt B.G."/>
            <person name="Jolley K.A."/>
            <person name="Maiden M.C.J."/>
            <person name="Kehoe M."/>
            <person name="Chanter N."/>
            <person name="Bentley S.D."/>
            <person name="Robinson C."/>
            <person name="Maskell D.J."/>
            <person name="Parkhill J."/>
            <person name="Waller A.S."/>
        </authorList>
    </citation>
    <scope>NUCLEOTIDE SEQUENCE [LARGE SCALE GENOMIC DNA]</scope>
    <source>
        <strain>4047</strain>
    </source>
</reference>
<proteinExistence type="inferred from homology"/>
<name>PYRR_STRE4</name>
<comment type="function">
    <text evidence="1">Regulates transcriptional attenuation of the pyrimidine nucleotide (pyr) operon by binding in a uridine-dependent manner to specific sites on pyr mRNA. This disrupts an antiterminator hairpin in the RNA and favors formation of a downstream transcription terminator, leading to a reduced expression of downstream genes.</text>
</comment>
<comment type="function">
    <text evidence="1">Also displays a weak uracil phosphoribosyltransferase activity which is not physiologically significant.</text>
</comment>
<comment type="catalytic activity">
    <reaction evidence="1">
        <text>UMP + diphosphate = 5-phospho-alpha-D-ribose 1-diphosphate + uracil</text>
        <dbReference type="Rhea" id="RHEA:13017"/>
        <dbReference type="ChEBI" id="CHEBI:17568"/>
        <dbReference type="ChEBI" id="CHEBI:33019"/>
        <dbReference type="ChEBI" id="CHEBI:57865"/>
        <dbReference type="ChEBI" id="CHEBI:58017"/>
        <dbReference type="EC" id="2.4.2.9"/>
    </reaction>
</comment>
<comment type="subunit">
    <text evidence="1">Homodimer and homohexamer; in equilibrium.</text>
</comment>
<comment type="similarity">
    <text evidence="1">Belongs to the purine/pyrimidine phosphoribosyltransferase family. PyrR subfamily.</text>
</comment>
<sequence length="173" mass="19489">MKSKVIVDELTMKRAITRITYEIIERNKQLDNVVLVGIKTRGVYLARRIQERLEQLESLHLAVGELDTKPFRDDMRVEEDTTSMPVDITGKDIILVDDVLYTGRTIRAAIDNLVSLGRPGRVSLAVLVDRGHRELPIRADYVGKNIPTSKTEEIVVEVVEVDGQDRISIVDPG</sequence>
<organism>
    <name type="scientific">Streptococcus equi subsp. equi (strain 4047)</name>
    <dbReference type="NCBI Taxonomy" id="553482"/>
    <lineage>
        <taxon>Bacteria</taxon>
        <taxon>Bacillati</taxon>
        <taxon>Bacillota</taxon>
        <taxon>Bacilli</taxon>
        <taxon>Lactobacillales</taxon>
        <taxon>Streptococcaceae</taxon>
        <taxon>Streptococcus</taxon>
    </lineage>
</organism>
<protein>
    <recommendedName>
        <fullName evidence="1">Bifunctional protein PyrR</fullName>
    </recommendedName>
    <domain>
        <recommendedName>
            <fullName evidence="1">Pyrimidine operon regulatory protein</fullName>
        </recommendedName>
    </domain>
    <domain>
        <recommendedName>
            <fullName evidence="1">Uracil phosphoribosyltransferase</fullName>
            <shortName evidence="1">UPRTase</shortName>
            <ecNumber evidence="1">2.4.2.9</ecNumber>
        </recommendedName>
    </domain>
</protein>
<keyword id="KW-0328">Glycosyltransferase</keyword>
<keyword id="KW-0694">RNA-binding</keyword>
<keyword id="KW-0804">Transcription</keyword>
<keyword id="KW-0805">Transcription regulation</keyword>
<keyword id="KW-0806">Transcription termination</keyword>
<keyword id="KW-0808">Transferase</keyword>
<accession>C0M760</accession>
<gene>
    <name evidence="1" type="primary">pyrR</name>
    <name type="ordered locus">SEQ_1317</name>
</gene>